<protein>
    <recommendedName>
        <fullName evidence="1">Probable transcriptional regulatory protein ABAYE2155</fullName>
    </recommendedName>
</protein>
<proteinExistence type="inferred from homology"/>
<name>Y2155_ACIBY</name>
<gene>
    <name type="ordered locus">ABAYE2155</name>
</gene>
<dbReference type="EMBL" id="CU459141">
    <property type="protein sequence ID" value="CAM87021.1"/>
    <property type="molecule type" value="Genomic_DNA"/>
</dbReference>
<dbReference type="RefSeq" id="WP_000907230.1">
    <property type="nucleotide sequence ID" value="NZ_JBDGFB010000034.1"/>
</dbReference>
<dbReference type="SMR" id="B0VC84"/>
<dbReference type="EnsemblBacteria" id="CAM87021">
    <property type="protein sequence ID" value="CAM87021"/>
    <property type="gene ID" value="ABAYE2155"/>
</dbReference>
<dbReference type="KEGG" id="aby:ABAYE2155"/>
<dbReference type="HOGENOM" id="CLU_062974_2_2_6"/>
<dbReference type="GO" id="GO:0005829">
    <property type="term" value="C:cytosol"/>
    <property type="evidence" value="ECO:0007669"/>
    <property type="project" value="TreeGrafter"/>
</dbReference>
<dbReference type="GO" id="GO:0003677">
    <property type="term" value="F:DNA binding"/>
    <property type="evidence" value="ECO:0007669"/>
    <property type="project" value="UniProtKB-UniRule"/>
</dbReference>
<dbReference type="GO" id="GO:0006355">
    <property type="term" value="P:regulation of DNA-templated transcription"/>
    <property type="evidence" value="ECO:0007669"/>
    <property type="project" value="UniProtKB-UniRule"/>
</dbReference>
<dbReference type="FunFam" id="1.10.10.200:FF:000001">
    <property type="entry name" value="Probable transcriptional regulatory protein YebC"/>
    <property type="match status" value="1"/>
</dbReference>
<dbReference type="FunFam" id="3.30.70.980:FF:000002">
    <property type="entry name" value="Probable transcriptional regulatory protein YebC"/>
    <property type="match status" value="1"/>
</dbReference>
<dbReference type="Gene3D" id="1.10.10.200">
    <property type="match status" value="1"/>
</dbReference>
<dbReference type="Gene3D" id="3.30.70.980">
    <property type="match status" value="2"/>
</dbReference>
<dbReference type="HAMAP" id="MF_00693">
    <property type="entry name" value="Transcrip_reg_TACO1"/>
    <property type="match status" value="1"/>
</dbReference>
<dbReference type="InterPro" id="IPR017856">
    <property type="entry name" value="Integrase-like_N"/>
</dbReference>
<dbReference type="InterPro" id="IPR048300">
    <property type="entry name" value="TACO1_YebC-like_2nd/3rd_dom"/>
</dbReference>
<dbReference type="InterPro" id="IPR049083">
    <property type="entry name" value="TACO1_YebC_N"/>
</dbReference>
<dbReference type="InterPro" id="IPR002876">
    <property type="entry name" value="Transcrip_reg_TACO1-like"/>
</dbReference>
<dbReference type="InterPro" id="IPR026564">
    <property type="entry name" value="Transcrip_reg_TACO1-like_dom3"/>
</dbReference>
<dbReference type="InterPro" id="IPR029072">
    <property type="entry name" value="YebC-like"/>
</dbReference>
<dbReference type="NCBIfam" id="NF001030">
    <property type="entry name" value="PRK00110.1"/>
    <property type="match status" value="1"/>
</dbReference>
<dbReference type="NCBIfam" id="NF009044">
    <property type="entry name" value="PRK12378.1"/>
    <property type="match status" value="1"/>
</dbReference>
<dbReference type="NCBIfam" id="TIGR01033">
    <property type="entry name" value="YebC/PmpR family DNA-binding transcriptional regulator"/>
    <property type="match status" value="1"/>
</dbReference>
<dbReference type="PANTHER" id="PTHR12532:SF6">
    <property type="entry name" value="TRANSCRIPTIONAL REGULATORY PROTEIN YEBC-RELATED"/>
    <property type="match status" value="1"/>
</dbReference>
<dbReference type="PANTHER" id="PTHR12532">
    <property type="entry name" value="TRANSLATIONAL ACTIVATOR OF CYTOCHROME C OXIDASE 1"/>
    <property type="match status" value="1"/>
</dbReference>
<dbReference type="Pfam" id="PF20772">
    <property type="entry name" value="TACO1_YebC_N"/>
    <property type="match status" value="1"/>
</dbReference>
<dbReference type="Pfam" id="PF01709">
    <property type="entry name" value="Transcrip_reg"/>
    <property type="match status" value="1"/>
</dbReference>
<dbReference type="SUPFAM" id="SSF75625">
    <property type="entry name" value="YebC-like"/>
    <property type="match status" value="1"/>
</dbReference>
<sequence length="249" mass="27012">MAGHSKWANIKHRKAKQDASRGKVFTKYIREIVTAAKLGGADPASNPRLRAVVEKALSVNMTRDTINRAIQRGVGGEDNDDLKEVTYEGYGVGGVAVLVETMTDNLNRTVPDVRHCFSKTNGNLGTAGSVAYLFTKRGEITFDDVSLEDKIMDVALEAGAEDIEVSEDEILVITSPETFGEVQDALAAAGLKSDNAEVVMSPSTKAEITDIDQAKQVMKLIDMLEDLDDVQNVYTNVEFSDEVLAQLDA</sequence>
<evidence type="ECO:0000255" key="1">
    <source>
        <dbReference type="HAMAP-Rule" id="MF_00693"/>
    </source>
</evidence>
<organism>
    <name type="scientific">Acinetobacter baumannii (strain AYE)</name>
    <dbReference type="NCBI Taxonomy" id="509173"/>
    <lineage>
        <taxon>Bacteria</taxon>
        <taxon>Pseudomonadati</taxon>
        <taxon>Pseudomonadota</taxon>
        <taxon>Gammaproteobacteria</taxon>
        <taxon>Moraxellales</taxon>
        <taxon>Moraxellaceae</taxon>
        <taxon>Acinetobacter</taxon>
        <taxon>Acinetobacter calcoaceticus/baumannii complex</taxon>
    </lineage>
</organism>
<reference key="1">
    <citation type="journal article" date="2008" name="PLoS ONE">
        <title>Comparative analysis of Acinetobacters: three genomes for three lifestyles.</title>
        <authorList>
            <person name="Vallenet D."/>
            <person name="Nordmann P."/>
            <person name="Barbe V."/>
            <person name="Poirel L."/>
            <person name="Mangenot S."/>
            <person name="Bataille E."/>
            <person name="Dossat C."/>
            <person name="Gas S."/>
            <person name="Kreimeyer A."/>
            <person name="Lenoble P."/>
            <person name="Oztas S."/>
            <person name="Poulain J."/>
            <person name="Segurens B."/>
            <person name="Robert C."/>
            <person name="Abergel C."/>
            <person name="Claverie J.-M."/>
            <person name="Raoult D."/>
            <person name="Medigue C."/>
            <person name="Weissenbach J."/>
            <person name="Cruveiller S."/>
        </authorList>
    </citation>
    <scope>NUCLEOTIDE SEQUENCE [LARGE SCALE GENOMIC DNA]</scope>
    <source>
        <strain>AYE</strain>
    </source>
</reference>
<comment type="subcellular location">
    <subcellularLocation>
        <location evidence="1">Cytoplasm</location>
    </subcellularLocation>
</comment>
<comment type="similarity">
    <text evidence="1">Belongs to the TACO1 family.</text>
</comment>
<feature type="chain" id="PRO_1000132140" description="Probable transcriptional regulatory protein ABAYE2155">
    <location>
        <begin position="1"/>
        <end position="249"/>
    </location>
</feature>
<accession>B0VC84</accession>
<keyword id="KW-0963">Cytoplasm</keyword>
<keyword id="KW-0238">DNA-binding</keyword>
<keyword id="KW-0804">Transcription</keyword>
<keyword id="KW-0805">Transcription regulation</keyword>